<evidence type="ECO:0000250" key="1"/>
<evidence type="ECO:0000255" key="2"/>
<evidence type="ECO:0000305" key="3"/>
<name>BGLL_NEOFI</name>
<comment type="function">
    <text evidence="1">Beta-glucosidases are one of a number of cellulolytic enzymes involved in the degradation of cellulosic biomass. Catalyzes the last step releasing glucose from the inhibitory cellobiose (By similarity).</text>
</comment>
<comment type="catalytic activity">
    <reaction>
        <text>Hydrolysis of terminal, non-reducing beta-D-glucosyl residues with release of beta-D-glucose.</text>
        <dbReference type="EC" id="3.2.1.21"/>
    </reaction>
</comment>
<comment type="pathway">
    <text>Glycan metabolism; cellulose degradation.</text>
</comment>
<comment type="subcellular location">
    <subcellularLocation>
        <location evidence="1">Secreted</location>
    </subcellularLocation>
</comment>
<comment type="similarity">
    <text evidence="3">Belongs to the glycosyl hydrolase 3 family.</text>
</comment>
<keyword id="KW-0119">Carbohydrate metabolism</keyword>
<keyword id="KW-0136">Cellulose degradation</keyword>
<keyword id="KW-0325">Glycoprotein</keyword>
<keyword id="KW-0326">Glycosidase</keyword>
<keyword id="KW-0378">Hydrolase</keyword>
<keyword id="KW-0624">Polysaccharide degradation</keyword>
<keyword id="KW-1185">Reference proteome</keyword>
<keyword id="KW-0964">Secreted</keyword>
<keyword id="KW-0732">Signal</keyword>
<protein>
    <recommendedName>
        <fullName>Probable beta-glucosidase L</fullName>
        <ecNumber>3.2.1.21</ecNumber>
    </recommendedName>
    <alternativeName>
        <fullName>Beta-D-glucoside glucohydrolase L</fullName>
    </alternativeName>
    <alternativeName>
        <fullName>Cellobiase L</fullName>
    </alternativeName>
    <alternativeName>
        <fullName>Gentiobiase L</fullName>
    </alternativeName>
</protein>
<gene>
    <name type="primary">bglL</name>
    <name type="ORF">NFIA_027390</name>
</gene>
<organism>
    <name type="scientific">Neosartorya fischeri (strain ATCC 1020 / DSM 3700 / CBS 544.65 / FGSC A1164 / JCM 1740 / NRRL 181 / WB 181)</name>
    <name type="common">Aspergillus fischerianus</name>
    <dbReference type="NCBI Taxonomy" id="331117"/>
    <lineage>
        <taxon>Eukaryota</taxon>
        <taxon>Fungi</taxon>
        <taxon>Dikarya</taxon>
        <taxon>Ascomycota</taxon>
        <taxon>Pezizomycotina</taxon>
        <taxon>Eurotiomycetes</taxon>
        <taxon>Eurotiomycetidae</taxon>
        <taxon>Eurotiales</taxon>
        <taxon>Aspergillaceae</taxon>
        <taxon>Aspergillus</taxon>
        <taxon>Aspergillus subgen. Fumigati</taxon>
    </lineage>
</organism>
<reference key="1">
    <citation type="journal article" date="2008" name="PLoS Genet.">
        <title>Genomic islands in the pathogenic filamentous fungus Aspergillus fumigatus.</title>
        <authorList>
            <person name="Fedorova N.D."/>
            <person name="Khaldi N."/>
            <person name="Joardar V.S."/>
            <person name="Maiti R."/>
            <person name="Amedeo P."/>
            <person name="Anderson M.J."/>
            <person name="Crabtree J."/>
            <person name="Silva J.C."/>
            <person name="Badger J.H."/>
            <person name="Albarraq A."/>
            <person name="Angiuoli S."/>
            <person name="Bussey H."/>
            <person name="Bowyer P."/>
            <person name="Cotty P.J."/>
            <person name="Dyer P.S."/>
            <person name="Egan A."/>
            <person name="Galens K."/>
            <person name="Fraser-Liggett C.M."/>
            <person name="Haas B.J."/>
            <person name="Inman J.M."/>
            <person name="Kent R."/>
            <person name="Lemieux S."/>
            <person name="Malavazi I."/>
            <person name="Orvis J."/>
            <person name="Roemer T."/>
            <person name="Ronning C.M."/>
            <person name="Sundaram J.P."/>
            <person name="Sutton G."/>
            <person name="Turner G."/>
            <person name="Venter J.C."/>
            <person name="White O.R."/>
            <person name="Whitty B.R."/>
            <person name="Youngman P."/>
            <person name="Wolfe K.H."/>
            <person name="Goldman G.H."/>
            <person name="Wortman J.R."/>
            <person name="Jiang B."/>
            <person name="Denning D.W."/>
            <person name="Nierman W.C."/>
        </authorList>
    </citation>
    <scope>NUCLEOTIDE SEQUENCE [LARGE SCALE GENOMIC DNA]</scope>
    <source>
        <strain>ATCC 1020 / DSM 3700 / CBS 544.65 / FGSC A1164 / JCM 1740 / NRRL 181 / WB 181</strain>
    </source>
</reference>
<sequence>MQNLFLSLLAAAVTVHAYGSGGSNWDQAYSRAKDALQKLSQTEKVGLVTGVKWMGGPCVGNTYKPESIDYPSLCLQDSPLGIRFANPVTAFPAGINAGATWDTQLLYARGAAMGAEAKGLGVHVQLGPVAGPLGKNPNGGRNWEGFSVDPYLSGVAMEKTIRGMQDSGVQACAKHWLGNEQEHYRDTISSNIGDRAAHELYVWPFMDAVKADVASVMCSYNKVNGTWACESDAINNKLMKEELGFPGYIMSDWNAQHSTVNSAVSGLDMTMPGSDFSNPPGSIFWGSNLEAAVADGSVPQSRLDDMVTRILAAWYLVGQDKGYPPVAFSSWNGGKANVDVTADHGTVARAVARDSIVLLKNDQRTLPLRKPKSLAIVGLDAIVNPAGPNACSDRGCNNGTLAMGWGSGTAEFPYLVGPLDAIQKRAAADGTKIVPSTTDDPTAGASAAAAAETAIVFINSDSGEGYITVEGNLGDRNNLDPWHNGNELVKAVAAASKNVIVVVHSVGPIILETILAQPSVKAIVWAGLPGQESGNALVDVIYGDTAPSGKLPYTIAKQAADYGASWINAETDDFTEGLYIDYRHFDAKGIAPRYEFGYGLSYTTFKYSGLWVNVYTSAGAANGKVVPGGPADLFEVVGQVSVFVRNNGRVAGAEVAQLYIGLPDSAPATPPKQLRGFQKMMLQPGQMGRATFELTRRDLSYWDVQQQKWVVPSGTFKVYVGSSSRDIREEGSFRVRRGW</sequence>
<dbReference type="EC" id="3.2.1.21"/>
<dbReference type="EMBL" id="DS027695">
    <property type="protein sequence ID" value="EAW19665.1"/>
    <property type="molecule type" value="Genomic_DNA"/>
</dbReference>
<dbReference type="RefSeq" id="XP_001261562.1">
    <property type="nucleotide sequence ID" value="XM_001261561.1"/>
</dbReference>
<dbReference type="SMR" id="A1DCV5"/>
<dbReference type="STRING" id="331117.A1DCV5"/>
<dbReference type="GlyCosmos" id="A1DCV5">
    <property type="glycosylation" value="2 sites, No reported glycans"/>
</dbReference>
<dbReference type="EnsemblFungi" id="EAW19665">
    <property type="protein sequence ID" value="EAW19665"/>
    <property type="gene ID" value="NFIA_027390"/>
</dbReference>
<dbReference type="GeneID" id="4587975"/>
<dbReference type="KEGG" id="nfi:NFIA_027390"/>
<dbReference type="VEuPathDB" id="FungiDB:NFIA_027390"/>
<dbReference type="eggNOG" id="ENOG502QR4D">
    <property type="taxonomic scope" value="Eukaryota"/>
</dbReference>
<dbReference type="HOGENOM" id="CLU_004542_2_3_1"/>
<dbReference type="OMA" id="MYGWDAY"/>
<dbReference type="OrthoDB" id="416222at2759"/>
<dbReference type="UniPathway" id="UPA00696"/>
<dbReference type="Proteomes" id="UP000006702">
    <property type="component" value="Unassembled WGS sequence"/>
</dbReference>
<dbReference type="GO" id="GO:0005576">
    <property type="term" value="C:extracellular region"/>
    <property type="evidence" value="ECO:0007669"/>
    <property type="project" value="UniProtKB-SubCell"/>
</dbReference>
<dbReference type="GO" id="GO:0008422">
    <property type="term" value="F:beta-glucosidase activity"/>
    <property type="evidence" value="ECO:0007669"/>
    <property type="project" value="UniProtKB-EC"/>
</dbReference>
<dbReference type="GO" id="GO:0030245">
    <property type="term" value="P:cellulose catabolic process"/>
    <property type="evidence" value="ECO:0007669"/>
    <property type="project" value="UniProtKB-UniPathway"/>
</dbReference>
<dbReference type="FunFam" id="2.60.40.10:FF:000757">
    <property type="entry name" value="Beta-glucosidase G"/>
    <property type="match status" value="1"/>
</dbReference>
<dbReference type="FunFam" id="3.20.20.300:FF:000002">
    <property type="entry name" value="Probable beta-glucosidase"/>
    <property type="match status" value="1"/>
</dbReference>
<dbReference type="FunFam" id="3.40.50.1700:FF:000003">
    <property type="entry name" value="Probable beta-glucosidase"/>
    <property type="match status" value="1"/>
</dbReference>
<dbReference type="Gene3D" id="3.40.50.1700">
    <property type="entry name" value="Glycoside hydrolase family 3 C-terminal domain"/>
    <property type="match status" value="1"/>
</dbReference>
<dbReference type="Gene3D" id="3.20.20.300">
    <property type="entry name" value="Glycoside hydrolase, family 3, N-terminal domain"/>
    <property type="match status" value="1"/>
</dbReference>
<dbReference type="Gene3D" id="2.60.40.10">
    <property type="entry name" value="Immunoglobulins"/>
    <property type="match status" value="1"/>
</dbReference>
<dbReference type="InterPro" id="IPR050288">
    <property type="entry name" value="Cellulose_deg_GH3"/>
</dbReference>
<dbReference type="InterPro" id="IPR026891">
    <property type="entry name" value="Fn3-like"/>
</dbReference>
<dbReference type="InterPro" id="IPR002772">
    <property type="entry name" value="Glyco_hydro_3_C"/>
</dbReference>
<dbReference type="InterPro" id="IPR036881">
    <property type="entry name" value="Glyco_hydro_3_C_sf"/>
</dbReference>
<dbReference type="InterPro" id="IPR001764">
    <property type="entry name" value="Glyco_hydro_3_N"/>
</dbReference>
<dbReference type="InterPro" id="IPR036962">
    <property type="entry name" value="Glyco_hydro_3_N_sf"/>
</dbReference>
<dbReference type="InterPro" id="IPR017853">
    <property type="entry name" value="Glycoside_hydrolase_SF"/>
</dbReference>
<dbReference type="InterPro" id="IPR013783">
    <property type="entry name" value="Ig-like_fold"/>
</dbReference>
<dbReference type="PANTHER" id="PTHR42715">
    <property type="entry name" value="BETA-GLUCOSIDASE"/>
    <property type="match status" value="1"/>
</dbReference>
<dbReference type="PANTHER" id="PTHR42715:SF28">
    <property type="entry name" value="BETA-GLUCOSIDASE L-RELATED"/>
    <property type="match status" value="1"/>
</dbReference>
<dbReference type="Pfam" id="PF14310">
    <property type="entry name" value="Fn3-like"/>
    <property type="match status" value="1"/>
</dbReference>
<dbReference type="Pfam" id="PF00933">
    <property type="entry name" value="Glyco_hydro_3"/>
    <property type="match status" value="1"/>
</dbReference>
<dbReference type="Pfam" id="PF01915">
    <property type="entry name" value="Glyco_hydro_3_C"/>
    <property type="match status" value="1"/>
</dbReference>
<dbReference type="PRINTS" id="PR00133">
    <property type="entry name" value="GLHYDRLASE3"/>
</dbReference>
<dbReference type="SMART" id="SM01217">
    <property type="entry name" value="Fn3_like"/>
    <property type="match status" value="1"/>
</dbReference>
<dbReference type="SUPFAM" id="SSF51445">
    <property type="entry name" value="(Trans)glycosidases"/>
    <property type="match status" value="1"/>
</dbReference>
<dbReference type="SUPFAM" id="SSF52279">
    <property type="entry name" value="Beta-D-glucan exohydrolase, C-terminal domain"/>
    <property type="match status" value="1"/>
</dbReference>
<accession>A1DCV5</accession>
<feature type="signal peptide" evidence="2">
    <location>
        <begin position="1"/>
        <end position="17"/>
    </location>
</feature>
<feature type="chain" id="PRO_0000394903" description="Probable beta-glucosidase L">
    <location>
        <begin position="18"/>
        <end position="739"/>
    </location>
</feature>
<feature type="active site" evidence="1">
    <location>
        <position position="252"/>
    </location>
</feature>
<feature type="glycosylation site" description="N-linked (GlcNAc...) asparagine" evidence="2">
    <location>
        <position position="224"/>
    </location>
</feature>
<feature type="glycosylation site" description="N-linked (GlcNAc...) asparagine" evidence="2">
    <location>
        <position position="398"/>
    </location>
</feature>
<proteinExistence type="inferred from homology"/>